<reference key="1">
    <citation type="journal article" date="1997" name="Nature">
        <title>Genomic sequence of a Lyme disease spirochaete, Borrelia burgdorferi.</title>
        <authorList>
            <person name="Fraser C.M."/>
            <person name="Casjens S."/>
            <person name="Huang W.M."/>
            <person name="Sutton G.G."/>
            <person name="Clayton R.A."/>
            <person name="Lathigra R."/>
            <person name="White O."/>
            <person name="Ketchum K.A."/>
            <person name="Dodson R.J."/>
            <person name="Hickey E.K."/>
            <person name="Gwinn M.L."/>
            <person name="Dougherty B.A."/>
            <person name="Tomb J.-F."/>
            <person name="Fleischmann R.D."/>
            <person name="Richardson D.L."/>
            <person name="Peterson J.D."/>
            <person name="Kerlavage A.R."/>
            <person name="Quackenbush J."/>
            <person name="Salzberg S.L."/>
            <person name="Hanson M."/>
            <person name="van Vugt R."/>
            <person name="Palmer N."/>
            <person name="Adams M.D."/>
            <person name="Gocayne J.D."/>
            <person name="Weidman J.F."/>
            <person name="Utterback T.R."/>
            <person name="Watthey L."/>
            <person name="McDonald L.A."/>
            <person name="Artiach P."/>
            <person name="Bowman C."/>
            <person name="Garland S.A."/>
            <person name="Fujii C."/>
            <person name="Cotton M.D."/>
            <person name="Horst K."/>
            <person name="Roberts K.M."/>
            <person name="Hatch B."/>
            <person name="Smith H.O."/>
            <person name="Venter J.C."/>
        </authorList>
    </citation>
    <scope>NUCLEOTIDE SEQUENCE [LARGE SCALE GENOMIC DNA]</scope>
    <source>
        <strain>ATCC 35210 / DSM 4680 / CIP 102532 / B31</strain>
    </source>
</reference>
<protein>
    <recommendedName>
        <fullName evidence="1">Large ribosomal subunit protein uL6</fullName>
    </recommendedName>
    <alternativeName>
        <fullName evidence="2">50S ribosomal protein L6</fullName>
    </alternativeName>
</protein>
<accession>O51446</accession>
<evidence type="ECO:0000255" key="1">
    <source>
        <dbReference type="HAMAP-Rule" id="MF_01365"/>
    </source>
</evidence>
<evidence type="ECO:0000305" key="2"/>
<evidence type="ECO:0007829" key="3">
    <source>
        <dbReference type="PDB" id="8FN2"/>
    </source>
</evidence>
<gene>
    <name evidence="1" type="primary">rplF</name>
    <name type="ordered locus">BB_0493</name>
</gene>
<feature type="chain" id="PRO_0000131039" description="Large ribosomal subunit protein uL6">
    <location>
        <begin position="1"/>
        <end position="180"/>
    </location>
</feature>
<feature type="helix" evidence="3">
    <location>
        <begin position="3"/>
        <end position="6"/>
    </location>
</feature>
<feature type="strand" evidence="3">
    <location>
        <begin position="16"/>
        <end position="20"/>
    </location>
</feature>
<feature type="strand" evidence="3">
    <location>
        <begin position="23"/>
        <end position="27"/>
    </location>
</feature>
<feature type="strand" evidence="3">
    <location>
        <begin position="32"/>
        <end position="36"/>
    </location>
</feature>
<feature type="strand" evidence="3">
    <location>
        <begin position="41"/>
        <end position="46"/>
    </location>
</feature>
<feature type="strand" evidence="3">
    <location>
        <begin position="49"/>
        <end position="55"/>
    </location>
</feature>
<feature type="helix" evidence="3">
    <location>
        <begin position="59"/>
        <end position="81"/>
    </location>
</feature>
<feature type="strand" evidence="3">
    <location>
        <begin position="83"/>
        <end position="91"/>
    </location>
</feature>
<feature type="strand" evidence="3">
    <location>
        <begin position="95"/>
        <end position="99"/>
    </location>
</feature>
<feature type="strand" evidence="3">
    <location>
        <begin position="102"/>
        <end position="106"/>
    </location>
</feature>
<feature type="strand" evidence="3">
    <location>
        <begin position="108"/>
        <end position="111"/>
    </location>
</feature>
<feature type="strand" evidence="3">
    <location>
        <begin position="113"/>
        <end position="116"/>
    </location>
</feature>
<feature type="strand" evidence="3">
    <location>
        <begin position="121"/>
        <end position="126"/>
    </location>
</feature>
<feature type="strand" evidence="3">
    <location>
        <begin position="129"/>
        <end position="136"/>
    </location>
</feature>
<feature type="helix" evidence="3">
    <location>
        <begin position="138"/>
        <end position="151"/>
    </location>
</feature>
<feature type="turn" evidence="3">
    <location>
        <begin position="156"/>
        <end position="158"/>
    </location>
</feature>
<feature type="strand" evidence="3">
    <location>
        <begin position="161"/>
        <end position="166"/>
    </location>
</feature>
<feature type="helix" evidence="3">
    <location>
        <begin position="176"/>
        <end position="178"/>
    </location>
</feature>
<comment type="function">
    <text evidence="1">This protein binds to the 23S rRNA, and is important in its secondary structure. It is located near the subunit interface in the base of the L7/L12 stalk, and near the tRNA binding site of the peptidyltransferase center.</text>
</comment>
<comment type="subunit">
    <text evidence="1">Part of the 50S ribosomal subunit.</text>
</comment>
<comment type="similarity">
    <text evidence="1">Belongs to the universal ribosomal protein uL6 family.</text>
</comment>
<dbReference type="EMBL" id="AE000783">
    <property type="protein sequence ID" value="AAC66849.1"/>
    <property type="molecule type" value="Genomic_DNA"/>
</dbReference>
<dbReference type="PIR" id="D70161">
    <property type="entry name" value="D70161"/>
</dbReference>
<dbReference type="RefSeq" id="NP_212627.1">
    <property type="nucleotide sequence ID" value="NC_001318.1"/>
</dbReference>
<dbReference type="RefSeq" id="WP_002656835.1">
    <property type="nucleotide sequence ID" value="NC_001318.1"/>
</dbReference>
<dbReference type="PDB" id="8FMW">
    <property type="method" value="EM"/>
    <property type="resolution" value="2.86 A"/>
    <property type="chains" value="AH=1-180"/>
</dbReference>
<dbReference type="PDB" id="8FN2">
    <property type="method" value="EM"/>
    <property type="resolution" value="3.40 A"/>
    <property type="chains" value="H=1-180"/>
</dbReference>
<dbReference type="PDBsum" id="8FMW"/>
<dbReference type="PDBsum" id="8FN2"/>
<dbReference type="EMDB" id="EMD-29298"/>
<dbReference type="EMDB" id="EMD-29304"/>
<dbReference type="SMR" id="O51446"/>
<dbReference type="STRING" id="224326.BB_0493"/>
<dbReference type="PaxDb" id="224326-BB_0493"/>
<dbReference type="EnsemblBacteria" id="AAC66849">
    <property type="protein sequence ID" value="AAC66849"/>
    <property type="gene ID" value="BB_0493"/>
</dbReference>
<dbReference type="GeneID" id="56567928"/>
<dbReference type="KEGG" id="bbu:BB_0493"/>
<dbReference type="PATRIC" id="fig|224326.49.peg.884"/>
<dbReference type="HOGENOM" id="CLU_065464_1_2_12"/>
<dbReference type="OrthoDB" id="9805007at2"/>
<dbReference type="Proteomes" id="UP000001807">
    <property type="component" value="Chromosome"/>
</dbReference>
<dbReference type="GO" id="GO:0022625">
    <property type="term" value="C:cytosolic large ribosomal subunit"/>
    <property type="evidence" value="ECO:0007669"/>
    <property type="project" value="TreeGrafter"/>
</dbReference>
<dbReference type="GO" id="GO:0019843">
    <property type="term" value="F:rRNA binding"/>
    <property type="evidence" value="ECO:0007669"/>
    <property type="project" value="UniProtKB-UniRule"/>
</dbReference>
<dbReference type="GO" id="GO:0003735">
    <property type="term" value="F:structural constituent of ribosome"/>
    <property type="evidence" value="ECO:0007669"/>
    <property type="project" value="InterPro"/>
</dbReference>
<dbReference type="GO" id="GO:0002181">
    <property type="term" value="P:cytoplasmic translation"/>
    <property type="evidence" value="ECO:0007669"/>
    <property type="project" value="TreeGrafter"/>
</dbReference>
<dbReference type="FunFam" id="3.90.930.12:FF:000001">
    <property type="entry name" value="50S ribosomal protein L6"/>
    <property type="match status" value="1"/>
</dbReference>
<dbReference type="FunFam" id="3.90.930.12:FF:000002">
    <property type="entry name" value="50S ribosomal protein L6"/>
    <property type="match status" value="1"/>
</dbReference>
<dbReference type="Gene3D" id="3.90.930.12">
    <property type="entry name" value="Ribosomal protein L6, alpha-beta domain"/>
    <property type="match status" value="2"/>
</dbReference>
<dbReference type="HAMAP" id="MF_01365_B">
    <property type="entry name" value="Ribosomal_uL6_B"/>
    <property type="match status" value="1"/>
</dbReference>
<dbReference type="InterPro" id="IPR000702">
    <property type="entry name" value="Ribosomal_uL6-like"/>
</dbReference>
<dbReference type="InterPro" id="IPR036789">
    <property type="entry name" value="Ribosomal_uL6-like_a/b-dom_sf"/>
</dbReference>
<dbReference type="InterPro" id="IPR020040">
    <property type="entry name" value="Ribosomal_uL6_a/b-dom"/>
</dbReference>
<dbReference type="InterPro" id="IPR019906">
    <property type="entry name" value="Ribosomal_uL6_bac-type"/>
</dbReference>
<dbReference type="InterPro" id="IPR002358">
    <property type="entry name" value="Ribosomal_uL6_CS"/>
</dbReference>
<dbReference type="NCBIfam" id="TIGR03654">
    <property type="entry name" value="L6_bact"/>
    <property type="match status" value="1"/>
</dbReference>
<dbReference type="PANTHER" id="PTHR11655">
    <property type="entry name" value="60S/50S RIBOSOMAL PROTEIN L6/L9"/>
    <property type="match status" value="1"/>
</dbReference>
<dbReference type="PANTHER" id="PTHR11655:SF14">
    <property type="entry name" value="LARGE RIBOSOMAL SUBUNIT PROTEIN UL6M"/>
    <property type="match status" value="1"/>
</dbReference>
<dbReference type="Pfam" id="PF00347">
    <property type="entry name" value="Ribosomal_L6"/>
    <property type="match status" value="2"/>
</dbReference>
<dbReference type="PIRSF" id="PIRSF002162">
    <property type="entry name" value="Ribosomal_L6"/>
    <property type="match status" value="1"/>
</dbReference>
<dbReference type="PRINTS" id="PR00059">
    <property type="entry name" value="RIBOSOMALL6"/>
</dbReference>
<dbReference type="SUPFAM" id="SSF56053">
    <property type="entry name" value="Ribosomal protein L6"/>
    <property type="match status" value="2"/>
</dbReference>
<dbReference type="PROSITE" id="PS00525">
    <property type="entry name" value="RIBOSOMAL_L6_1"/>
    <property type="match status" value="1"/>
</dbReference>
<name>RL6_BORBU</name>
<sequence length="180" mass="19938">MSRIGRLPIKIPDAVKVDVKDNLVIVEGIRGRLVQDIKDSINVKVENGSVIVDRVLNDKKAKAYHGLYRSLIFNMVKGVTEGFSKSLTINGIGYRVEQQGNSLFLSLGYSTQFEYVIPDGISVKLDGNTKISVEGIDKFKVGQVAAEIRSLKKPEPYKGKGIKYDNEVIRRKVGKSGVKK</sequence>
<proteinExistence type="evidence at protein level"/>
<keyword id="KW-0002">3D-structure</keyword>
<keyword id="KW-1185">Reference proteome</keyword>
<keyword id="KW-0687">Ribonucleoprotein</keyword>
<keyword id="KW-0689">Ribosomal protein</keyword>
<keyword id="KW-0694">RNA-binding</keyword>
<keyword id="KW-0699">rRNA-binding</keyword>
<organism>
    <name type="scientific">Borreliella burgdorferi (strain ATCC 35210 / DSM 4680 / CIP 102532 / B31)</name>
    <name type="common">Borrelia burgdorferi</name>
    <dbReference type="NCBI Taxonomy" id="224326"/>
    <lineage>
        <taxon>Bacteria</taxon>
        <taxon>Pseudomonadati</taxon>
        <taxon>Spirochaetota</taxon>
        <taxon>Spirochaetia</taxon>
        <taxon>Spirochaetales</taxon>
        <taxon>Borreliaceae</taxon>
        <taxon>Borreliella</taxon>
    </lineage>
</organism>